<gene>
    <name evidence="1" type="primary">hemA</name>
    <name type="ordered locus">YPO2016</name>
    <name type="ordered locus">y2291</name>
    <name type="ordered locus">YP_1864</name>
</gene>
<reference key="1">
    <citation type="journal article" date="2001" name="Nature">
        <title>Genome sequence of Yersinia pestis, the causative agent of plague.</title>
        <authorList>
            <person name="Parkhill J."/>
            <person name="Wren B.W."/>
            <person name="Thomson N.R."/>
            <person name="Titball R.W."/>
            <person name="Holden M.T.G."/>
            <person name="Prentice M.B."/>
            <person name="Sebaihia M."/>
            <person name="James K.D."/>
            <person name="Churcher C.M."/>
            <person name="Mungall K.L."/>
            <person name="Baker S."/>
            <person name="Basham D."/>
            <person name="Bentley S.D."/>
            <person name="Brooks K."/>
            <person name="Cerdeno-Tarraga A.-M."/>
            <person name="Chillingworth T."/>
            <person name="Cronin A."/>
            <person name="Davies R.M."/>
            <person name="Davis P."/>
            <person name="Dougan G."/>
            <person name="Feltwell T."/>
            <person name="Hamlin N."/>
            <person name="Holroyd S."/>
            <person name="Jagels K."/>
            <person name="Karlyshev A.V."/>
            <person name="Leather S."/>
            <person name="Moule S."/>
            <person name="Oyston P.C.F."/>
            <person name="Quail M.A."/>
            <person name="Rutherford K.M."/>
            <person name="Simmonds M."/>
            <person name="Skelton J."/>
            <person name="Stevens K."/>
            <person name="Whitehead S."/>
            <person name="Barrell B.G."/>
        </authorList>
    </citation>
    <scope>NUCLEOTIDE SEQUENCE [LARGE SCALE GENOMIC DNA]</scope>
    <source>
        <strain>CO-92 / Biovar Orientalis</strain>
    </source>
</reference>
<reference key="2">
    <citation type="journal article" date="2002" name="J. Bacteriol.">
        <title>Genome sequence of Yersinia pestis KIM.</title>
        <authorList>
            <person name="Deng W."/>
            <person name="Burland V."/>
            <person name="Plunkett G. III"/>
            <person name="Boutin A."/>
            <person name="Mayhew G.F."/>
            <person name="Liss P."/>
            <person name="Perna N.T."/>
            <person name="Rose D.J."/>
            <person name="Mau B."/>
            <person name="Zhou S."/>
            <person name="Schwartz D.C."/>
            <person name="Fetherston J.D."/>
            <person name="Lindler L.E."/>
            <person name="Brubaker R.R."/>
            <person name="Plano G.V."/>
            <person name="Straley S.C."/>
            <person name="McDonough K.A."/>
            <person name="Nilles M.L."/>
            <person name="Matson J.S."/>
            <person name="Blattner F.R."/>
            <person name="Perry R.D."/>
        </authorList>
    </citation>
    <scope>NUCLEOTIDE SEQUENCE [LARGE SCALE GENOMIC DNA]</scope>
    <source>
        <strain>KIM10+ / Biovar Mediaevalis</strain>
    </source>
</reference>
<reference key="3">
    <citation type="journal article" date="2004" name="DNA Res.">
        <title>Complete genome sequence of Yersinia pestis strain 91001, an isolate avirulent to humans.</title>
        <authorList>
            <person name="Song Y."/>
            <person name="Tong Z."/>
            <person name="Wang J."/>
            <person name="Wang L."/>
            <person name="Guo Z."/>
            <person name="Han Y."/>
            <person name="Zhang J."/>
            <person name="Pei D."/>
            <person name="Zhou D."/>
            <person name="Qin H."/>
            <person name="Pang X."/>
            <person name="Han Y."/>
            <person name="Zhai J."/>
            <person name="Li M."/>
            <person name="Cui B."/>
            <person name="Qi Z."/>
            <person name="Jin L."/>
            <person name="Dai R."/>
            <person name="Chen F."/>
            <person name="Li S."/>
            <person name="Ye C."/>
            <person name="Du Z."/>
            <person name="Lin W."/>
            <person name="Wang J."/>
            <person name="Yu J."/>
            <person name="Yang H."/>
            <person name="Wang J."/>
            <person name="Huang P."/>
            <person name="Yang R."/>
        </authorList>
    </citation>
    <scope>NUCLEOTIDE SEQUENCE [LARGE SCALE GENOMIC DNA]</scope>
    <source>
        <strain>91001 / Biovar Mediaevalis</strain>
    </source>
</reference>
<protein>
    <recommendedName>
        <fullName evidence="1">Glutamyl-tRNA reductase</fullName>
        <shortName evidence="1">GluTR</shortName>
        <ecNumber evidence="1">1.2.1.70</ecNumber>
    </recommendedName>
</protein>
<accession>Q8ZEX9</accession>
<accession>Q0WFD6</accession>
<proteinExistence type="inferred from homology"/>
<sequence length="420" mass="46660">MTLLALGINHKTAPVSLRERVTFSPESMDQALNSLLQQPLVQGGVVLSTCNRTELYLSVEQQENLHEQLTAWLCNYHKLSPDDVRQSLYWHHGNDAVRHLMRVASGLDSQVLGEPQILGQVKKAFAESQRGQSLSSELERLFQKSFSVAKRVRTETEIGASAVSVAFAACSLARQIFESLSELHVLLVGAGETIELVARHLREHQVKHMIIANRTRERAQSLASEVGAEVITLPEIDARLADADIIISSTASPLPIIGKGMVERALKTRRNQPMLFIDIAVPRDIEPEVGKLSNAYLYSVDDLQAIIQHNMAQRQAAAVQAESIVQQESMNFMTWLRAQGAVETIRDYRSQAEQVRSEMTAKALVAIEQGANVEQVINELAYKLTNRLIHAPTKSLQQAASDGDMERLQLLRDSLGLDQH</sequence>
<comment type="function">
    <text evidence="1">Catalyzes the NADPH-dependent reduction of glutamyl-tRNA(Glu) to glutamate 1-semialdehyde (GSA).</text>
</comment>
<comment type="catalytic activity">
    <reaction evidence="1">
        <text>(S)-4-amino-5-oxopentanoate + tRNA(Glu) + NADP(+) = L-glutamyl-tRNA(Glu) + NADPH + H(+)</text>
        <dbReference type="Rhea" id="RHEA:12344"/>
        <dbReference type="Rhea" id="RHEA-COMP:9663"/>
        <dbReference type="Rhea" id="RHEA-COMP:9680"/>
        <dbReference type="ChEBI" id="CHEBI:15378"/>
        <dbReference type="ChEBI" id="CHEBI:57501"/>
        <dbReference type="ChEBI" id="CHEBI:57783"/>
        <dbReference type="ChEBI" id="CHEBI:58349"/>
        <dbReference type="ChEBI" id="CHEBI:78442"/>
        <dbReference type="ChEBI" id="CHEBI:78520"/>
        <dbReference type="EC" id="1.2.1.70"/>
    </reaction>
</comment>
<comment type="pathway">
    <text evidence="1">Porphyrin-containing compound metabolism; protoporphyrin-IX biosynthesis; 5-aminolevulinate from L-glutamyl-tRNA(Glu): step 1/2.</text>
</comment>
<comment type="subunit">
    <text evidence="1">Homodimer.</text>
</comment>
<comment type="domain">
    <text evidence="1">Possesses an unusual extended V-shaped dimeric structure with each monomer consisting of three distinct domains arranged along a curved 'spinal' alpha-helix. The N-terminal catalytic domain specifically recognizes the glutamate moiety of the substrate. The second domain is the NADPH-binding domain, and the third C-terminal domain is responsible for dimerization.</text>
</comment>
<comment type="miscellaneous">
    <text evidence="1">During catalysis, the active site Cys acts as a nucleophile attacking the alpha-carbonyl group of tRNA-bound glutamate with the formation of a thioester intermediate between enzyme and glutamate, and the concomitant release of tRNA(Glu). The thioester intermediate is finally reduced by direct hydride transfer from NADPH, to form the product GSA.</text>
</comment>
<comment type="similarity">
    <text evidence="1">Belongs to the glutamyl-tRNA reductase family.</text>
</comment>
<comment type="sequence caution" evidence="2">
    <conflict type="erroneous initiation">
        <sequence resource="EMBL-CDS" id="AAM85850"/>
    </conflict>
</comment>
<comment type="sequence caution" evidence="2">
    <conflict type="erroneous initiation">
        <sequence resource="EMBL-CDS" id="AAS62084"/>
    </conflict>
</comment>
<evidence type="ECO:0000255" key="1">
    <source>
        <dbReference type="HAMAP-Rule" id="MF_00087"/>
    </source>
</evidence>
<evidence type="ECO:0000305" key="2"/>
<name>HEM1_YERPE</name>
<organism>
    <name type="scientific">Yersinia pestis</name>
    <dbReference type="NCBI Taxonomy" id="632"/>
    <lineage>
        <taxon>Bacteria</taxon>
        <taxon>Pseudomonadati</taxon>
        <taxon>Pseudomonadota</taxon>
        <taxon>Gammaproteobacteria</taxon>
        <taxon>Enterobacterales</taxon>
        <taxon>Yersiniaceae</taxon>
        <taxon>Yersinia</taxon>
    </lineage>
</organism>
<feature type="chain" id="PRO_0000114094" description="Glutamyl-tRNA reductase">
    <location>
        <begin position="1"/>
        <end position="420"/>
    </location>
</feature>
<feature type="active site" description="Nucleophile" evidence="1">
    <location>
        <position position="50"/>
    </location>
</feature>
<feature type="binding site" evidence="1">
    <location>
        <begin position="49"/>
        <end position="52"/>
    </location>
    <ligand>
        <name>substrate</name>
    </ligand>
</feature>
<feature type="binding site" evidence="1">
    <location>
        <position position="109"/>
    </location>
    <ligand>
        <name>substrate</name>
    </ligand>
</feature>
<feature type="binding site" evidence="1">
    <location>
        <begin position="114"/>
        <end position="116"/>
    </location>
    <ligand>
        <name>substrate</name>
    </ligand>
</feature>
<feature type="binding site" evidence="1">
    <location>
        <position position="120"/>
    </location>
    <ligand>
        <name>substrate</name>
    </ligand>
</feature>
<feature type="binding site" evidence="1">
    <location>
        <begin position="189"/>
        <end position="194"/>
    </location>
    <ligand>
        <name>NADP(+)</name>
        <dbReference type="ChEBI" id="CHEBI:58349"/>
    </ligand>
</feature>
<feature type="site" description="Important for activity" evidence="1">
    <location>
        <position position="99"/>
    </location>
</feature>
<feature type="sequence conflict" description="In Ref. 3; AAS62084." evidence="2" ref="3">
    <original>LDQH</original>
    <variation>WISISFL</variation>
    <location>
        <begin position="417"/>
        <end position="420"/>
    </location>
</feature>
<keyword id="KW-0521">NADP</keyword>
<keyword id="KW-0560">Oxidoreductase</keyword>
<keyword id="KW-0627">Porphyrin biosynthesis</keyword>
<keyword id="KW-1185">Reference proteome</keyword>
<dbReference type="EC" id="1.2.1.70" evidence="1"/>
<dbReference type="EMBL" id="AL590842">
    <property type="protein sequence ID" value="CAL20653.1"/>
    <property type="molecule type" value="Genomic_DNA"/>
</dbReference>
<dbReference type="EMBL" id="AE009952">
    <property type="protein sequence ID" value="AAM85850.1"/>
    <property type="status" value="ALT_INIT"/>
    <property type="molecule type" value="Genomic_DNA"/>
</dbReference>
<dbReference type="EMBL" id="AE017042">
    <property type="protein sequence ID" value="AAS62084.1"/>
    <property type="status" value="ALT_INIT"/>
    <property type="molecule type" value="Genomic_DNA"/>
</dbReference>
<dbReference type="PIR" id="AB0246">
    <property type="entry name" value="AB0246"/>
</dbReference>
<dbReference type="RefSeq" id="WP_002211237.1">
    <property type="nucleotide sequence ID" value="NZ_WUCM01000039.1"/>
</dbReference>
<dbReference type="RefSeq" id="YP_002347002.1">
    <property type="nucleotide sequence ID" value="NC_003143.1"/>
</dbReference>
<dbReference type="SMR" id="Q8ZEX9"/>
<dbReference type="IntAct" id="Q8ZEX9">
    <property type="interactions" value="2"/>
</dbReference>
<dbReference type="STRING" id="214092.YPO2016"/>
<dbReference type="PaxDb" id="214092-YPO2016"/>
<dbReference type="EnsemblBacteria" id="AAS62084">
    <property type="protein sequence ID" value="AAS62084"/>
    <property type="gene ID" value="YP_1864"/>
</dbReference>
<dbReference type="GeneID" id="57976645"/>
<dbReference type="KEGG" id="ype:YPO2016"/>
<dbReference type="KEGG" id="ypk:y2291"/>
<dbReference type="KEGG" id="ypm:YP_1864"/>
<dbReference type="PATRIC" id="fig|214092.21.peg.2401"/>
<dbReference type="eggNOG" id="COG0373">
    <property type="taxonomic scope" value="Bacteria"/>
</dbReference>
<dbReference type="HOGENOM" id="CLU_035113_2_2_6"/>
<dbReference type="OrthoDB" id="110209at2"/>
<dbReference type="UniPathway" id="UPA00251">
    <property type="reaction ID" value="UER00316"/>
</dbReference>
<dbReference type="Proteomes" id="UP000000815">
    <property type="component" value="Chromosome"/>
</dbReference>
<dbReference type="Proteomes" id="UP000001019">
    <property type="component" value="Chromosome"/>
</dbReference>
<dbReference type="Proteomes" id="UP000002490">
    <property type="component" value="Chromosome"/>
</dbReference>
<dbReference type="GO" id="GO:0008883">
    <property type="term" value="F:glutamyl-tRNA reductase activity"/>
    <property type="evidence" value="ECO:0000318"/>
    <property type="project" value="GO_Central"/>
</dbReference>
<dbReference type="GO" id="GO:0050661">
    <property type="term" value="F:NADP binding"/>
    <property type="evidence" value="ECO:0007669"/>
    <property type="project" value="InterPro"/>
</dbReference>
<dbReference type="GO" id="GO:0019353">
    <property type="term" value="P:protoporphyrinogen IX biosynthetic process from glutamate"/>
    <property type="evidence" value="ECO:0000318"/>
    <property type="project" value="GO_Central"/>
</dbReference>
<dbReference type="CDD" id="cd05213">
    <property type="entry name" value="NAD_bind_Glutamyl_tRNA_reduct"/>
    <property type="match status" value="1"/>
</dbReference>
<dbReference type="FunFam" id="3.30.460.30:FF:000001">
    <property type="entry name" value="Glutamyl-tRNA reductase"/>
    <property type="match status" value="1"/>
</dbReference>
<dbReference type="FunFam" id="3.40.50.720:FF:000031">
    <property type="entry name" value="Glutamyl-tRNA reductase"/>
    <property type="match status" value="1"/>
</dbReference>
<dbReference type="Gene3D" id="3.30.460.30">
    <property type="entry name" value="Glutamyl-tRNA reductase, N-terminal domain"/>
    <property type="match status" value="1"/>
</dbReference>
<dbReference type="Gene3D" id="3.40.50.720">
    <property type="entry name" value="NAD(P)-binding Rossmann-like Domain"/>
    <property type="match status" value="1"/>
</dbReference>
<dbReference type="HAMAP" id="MF_00087">
    <property type="entry name" value="Glu_tRNA_reductase"/>
    <property type="match status" value="1"/>
</dbReference>
<dbReference type="InterPro" id="IPR000343">
    <property type="entry name" value="4pyrrol_synth_GluRdtase"/>
</dbReference>
<dbReference type="InterPro" id="IPR015896">
    <property type="entry name" value="4pyrrol_synth_GluRdtase_dimer"/>
</dbReference>
<dbReference type="InterPro" id="IPR015895">
    <property type="entry name" value="4pyrrol_synth_GluRdtase_N"/>
</dbReference>
<dbReference type="InterPro" id="IPR018214">
    <property type="entry name" value="GluRdtase_CS"/>
</dbReference>
<dbReference type="InterPro" id="IPR036453">
    <property type="entry name" value="GluRdtase_dimer_dom_sf"/>
</dbReference>
<dbReference type="InterPro" id="IPR036343">
    <property type="entry name" value="GluRdtase_N_sf"/>
</dbReference>
<dbReference type="InterPro" id="IPR036291">
    <property type="entry name" value="NAD(P)-bd_dom_sf"/>
</dbReference>
<dbReference type="InterPro" id="IPR006151">
    <property type="entry name" value="Shikm_DH/Glu-tRNA_Rdtase"/>
</dbReference>
<dbReference type="NCBIfam" id="TIGR01035">
    <property type="entry name" value="hemA"/>
    <property type="match status" value="1"/>
</dbReference>
<dbReference type="PANTHER" id="PTHR43013">
    <property type="entry name" value="GLUTAMYL-TRNA REDUCTASE"/>
    <property type="match status" value="1"/>
</dbReference>
<dbReference type="PANTHER" id="PTHR43013:SF1">
    <property type="entry name" value="GLUTAMYL-TRNA REDUCTASE"/>
    <property type="match status" value="1"/>
</dbReference>
<dbReference type="Pfam" id="PF00745">
    <property type="entry name" value="GlutR_dimer"/>
    <property type="match status" value="1"/>
</dbReference>
<dbReference type="Pfam" id="PF05201">
    <property type="entry name" value="GlutR_N"/>
    <property type="match status" value="1"/>
</dbReference>
<dbReference type="Pfam" id="PF01488">
    <property type="entry name" value="Shikimate_DH"/>
    <property type="match status" value="1"/>
</dbReference>
<dbReference type="PIRSF" id="PIRSF000445">
    <property type="entry name" value="4pyrrol_synth_GluRdtase"/>
    <property type="match status" value="1"/>
</dbReference>
<dbReference type="SUPFAM" id="SSF69742">
    <property type="entry name" value="Glutamyl tRNA-reductase catalytic, N-terminal domain"/>
    <property type="match status" value="1"/>
</dbReference>
<dbReference type="SUPFAM" id="SSF69075">
    <property type="entry name" value="Glutamyl tRNA-reductase dimerization domain"/>
    <property type="match status" value="1"/>
</dbReference>
<dbReference type="SUPFAM" id="SSF51735">
    <property type="entry name" value="NAD(P)-binding Rossmann-fold domains"/>
    <property type="match status" value="1"/>
</dbReference>
<dbReference type="PROSITE" id="PS00747">
    <property type="entry name" value="GLUTR"/>
    <property type="match status" value="1"/>
</dbReference>